<feature type="chain" id="PRO_0000462239" description="Akuammiline synthase 1">
    <location>
        <begin position="1"/>
        <end position="419"/>
    </location>
</feature>
<feature type="short sequence motif" description="Nuclear localization signal" evidence="4">
    <location>
        <begin position="206"/>
        <end position="213"/>
    </location>
</feature>
<feature type="active site" description="Proton acceptor" evidence="3">
    <location>
        <position position="151"/>
    </location>
</feature>
<feature type="active site" description="Proton acceptor" evidence="3">
    <location>
        <position position="359"/>
    </location>
</feature>
<gene>
    <name evidence="6" type="primary">AKS1</name>
    <name evidence="6" type="synonym">BAHD3</name>
</gene>
<comment type="function">
    <text evidence="5">Acyltransferase involved in the biosynthesis of akuammilan monoterpene indole alkaloids (MIAs) natural products, components with various biological properties such as antidiabetic, antibacterial, anti-inflammatory, anticancer, and antimalarial activities (PubMed:36349266). Catalyzes the conversion of rhazimol to akuammiline (PubMed:36349266).</text>
</comment>
<comment type="catalytic activity">
    <reaction evidence="5">
        <text>rhazimol + acetyl-CoA = akuammiline + CoA + H(+)</text>
        <dbReference type="Rhea" id="RHEA:79623"/>
        <dbReference type="ChEBI" id="CHEBI:15378"/>
        <dbReference type="ChEBI" id="CHEBI:57287"/>
        <dbReference type="ChEBI" id="CHEBI:57288"/>
        <dbReference type="ChEBI" id="CHEBI:141879"/>
        <dbReference type="ChEBI" id="CHEBI:230474"/>
        <dbReference type="EC" id="2.3.1.322"/>
    </reaction>
    <physiologicalReaction direction="left-to-right" evidence="5">
        <dbReference type="Rhea" id="RHEA:79624"/>
    </physiologicalReaction>
</comment>
<comment type="biophysicochemical properties">
    <phDependence>
        <text evidence="5">Optimum pH is 6.</text>
    </phDependence>
    <temperatureDependence>
        <text evidence="5">Optimum temperature is 32-37 degrees Celsius.</text>
    </temperatureDependence>
</comment>
<comment type="pathway">
    <text evidence="5">Alkaloid biosynthesis.</text>
</comment>
<comment type="subunit">
    <text evidence="2">Monomer.</text>
</comment>
<comment type="subcellular location">
    <subcellularLocation>
        <location evidence="1">Cytoplasm</location>
    </subcellularLocation>
    <subcellularLocation>
        <location evidence="1 4">Nucleus</location>
    </subcellularLocation>
</comment>
<comment type="similarity">
    <text evidence="7">Belongs to the plant acyltransferase family.</text>
</comment>
<sequence length="419" mass="46663">MAPILQRISKTFIKPSSPTPESLRCYNLSSSDQMITSVYISLAFFYGSPGCESSRIRQQLDNSLSRTLVYYYPFAGRLVDNDHIDCNDQGVQFVEVRIHCPISAILKQTTSYAEDLVFPRGTSACHEDSLVVVQLNRFECGGVAIAVCISHKVADGSGAIAFINDWAATARVSSHIPSPLLVADSIFPHLDNSLPVPYNLSKNCVTRRFVFPAAEIEKLKSKAVESGLQQPTRVEVVTALLYQCALLASRSTNSGLSRPSVLIQAVNLRPFLVPPLPRNSVGNIFSINFSIIEVDSLEFPELAGRLRKAKLKFQNLSQEKLYYDSQMQELGECLKQLNTGNFDVYYCSSWCRFPVYDVDFGWGKPTWVCTVKSQIKDMIVLMDSPGDEIAAFVTLEEEKMSAFQHNELLLSFASLYSAK</sequence>
<dbReference type="EC" id="2.3.1.322" evidence="5"/>
<dbReference type="EMBL" id="OM323332">
    <property type="protein sequence ID" value="URS65387.1"/>
    <property type="molecule type" value="mRNA"/>
</dbReference>
<dbReference type="KEGG" id="ag:URS65387"/>
<dbReference type="GO" id="GO:0016746">
    <property type="term" value="F:acyltransferase activity"/>
    <property type="evidence" value="ECO:0000314"/>
    <property type="project" value="UniProtKB"/>
</dbReference>
<dbReference type="GO" id="GO:0016747">
    <property type="term" value="F:acyltransferase activity, transferring groups other than amino-acyl groups"/>
    <property type="evidence" value="ECO:0007669"/>
    <property type="project" value="UniProtKB-ARBA"/>
</dbReference>
<dbReference type="GO" id="GO:0035835">
    <property type="term" value="P:indole alkaloid biosynthetic process"/>
    <property type="evidence" value="ECO:0000314"/>
    <property type="project" value="UniProtKB"/>
</dbReference>
<dbReference type="Gene3D" id="3.30.559.10">
    <property type="entry name" value="Chloramphenicol acetyltransferase-like domain"/>
    <property type="match status" value="2"/>
</dbReference>
<dbReference type="InterPro" id="IPR023213">
    <property type="entry name" value="CAT-like_dom_sf"/>
</dbReference>
<dbReference type="PANTHER" id="PTHR31623:SF88">
    <property type="entry name" value="ACYLSUGAR ACYLTRANSFERASE 3-LIKE"/>
    <property type="match status" value="1"/>
</dbReference>
<dbReference type="PANTHER" id="PTHR31623">
    <property type="entry name" value="F21J9.9"/>
    <property type="match status" value="1"/>
</dbReference>
<dbReference type="Pfam" id="PF02458">
    <property type="entry name" value="Transferase"/>
    <property type="match status" value="1"/>
</dbReference>
<name>AKS1_ALSSC</name>
<organism>
    <name type="scientific">Alstonia scholaris</name>
    <name type="common">Dogbane</name>
    <name type="synonym">Echites scholaris</name>
    <dbReference type="NCBI Taxonomy" id="52822"/>
    <lineage>
        <taxon>Eukaryota</taxon>
        <taxon>Viridiplantae</taxon>
        <taxon>Streptophyta</taxon>
        <taxon>Embryophyta</taxon>
        <taxon>Tracheophyta</taxon>
        <taxon>Spermatophyta</taxon>
        <taxon>Magnoliopsida</taxon>
        <taxon>eudicotyledons</taxon>
        <taxon>Gunneridae</taxon>
        <taxon>Pentapetalae</taxon>
        <taxon>asterids</taxon>
        <taxon>lamiids</taxon>
        <taxon>Gentianales</taxon>
        <taxon>Apocynaceae</taxon>
        <taxon>Rauvolfioideae</taxon>
        <taxon>Alstonieae</taxon>
        <taxon>Alstonia</taxon>
    </lineage>
</organism>
<protein>
    <recommendedName>
        <fullName evidence="6">Akuammiline synthase 1</fullName>
        <shortName evidence="6">AsAKS1</shortName>
        <ecNumber evidence="5">2.3.1.322</ecNumber>
    </recommendedName>
</protein>
<proteinExistence type="evidence at protein level"/>
<accession>A0A9E7S5E3</accession>
<keyword id="KW-0012">Acyltransferase</keyword>
<keyword id="KW-0017">Alkaloid metabolism</keyword>
<keyword id="KW-0963">Cytoplasm</keyword>
<keyword id="KW-0539">Nucleus</keyword>
<keyword id="KW-0808">Transferase</keyword>
<evidence type="ECO:0000250" key="1">
    <source>
        <dbReference type="UniProtKB" id="A0A2K8FQU5"/>
    </source>
</evidence>
<evidence type="ECO:0000250" key="2">
    <source>
        <dbReference type="UniProtKB" id="Q9ZTK5"/>
    </source>
</evidence>
<evidence type="ECO:0000255" key="3"/>
<evidence type="ECO:0000255" key="4">
    <source>
        <dbReference type="PROSITE-ProRule" id="PRU00768"/>
    </source>
</evidence>
<evidence type="ECO:0000269" key="5">
    <source>
    </source>
</evidence>
<evidence type="ECO:0000303" key="6">
    <source>
    </source>
</evidence>
<evidence type="ECO:0000305" key="7"/>
<evidence type="ECO:0000312" key="8">
    <source>
        <dbReference type="EMBL" id="URS65387.1"/>
    </source>
</evidence>
<reference evidence="8" key="1">
    <citation type="journal article" date="2022" name="Chem. Sci.">
        <title>Deciphering and reprogramming the cyclization regioselectivity in bifurcation of indole alkaloid biosynthesis.</title>
        <authorList>
            <person name="Wang Z."/>
            <person name="Xiao Y."/>
            <person name="Wu S."/>
            <person name="Chen J."/>
            <person name="Li A."/>
            <person name="Tatsis E.C."/>
        </authorList>
    </citation>
    <scope>NUCLEOTIDE SEQUENCE [MRNA]</scope>
    <scope>FUNCTION</scope>
    <scope>CATALYTIC ACTIVITY</scope>
    <scope>PATHWAY</scope>
    <scope>BIOPHYSICOCHEMICAL PROPERTIES</scope>
</reference>